<protein>
    <recommendedName>
        <fullName>Uncharacterized protein FPV236</fullName>
    </recommendedName>
    <alternativeName>
        <fullName>BamHI-ORF10</fullName>
    </alternativeName>
</protein>
<name>V236_FOWPN</name>
<accession>P14365</accession>
<organismHost>
    <name type="scientific">Vertebrata</name>
    <dbReference type="NCBI Taxonomy" id="7742"/>
</organismHost>
<evidence type="ECO:0000255" key="1">
    <source>
        <dbReference type="PROSITE-ProRule" id="PRU00631"/>
    </source>
</evidence>
<dbReference type="EMBL" id="AF198100">
    <property type="protein sequence ID" value="AAF44580.1"/>
    <property type="molecule type" value="Genomic_DNA"/>
</dbReference>
<dbReference type="EMBL" id="D00295">
    <property type="protein sequence ID" value="BAA00205.1"/>
    <property type="molecule type" value="Genomic_DNA"/>
</dbReference>
<dbReference type="PIR" id="A30087">
    <property type="entry name" value="WMVZFT"/>
</dbReference>
<dbReference type="RefSeq" id="NP_039199.1">
    <property type="nucleotide sequence ID" value="NC_002188.1"/>
</dbReference>
<dbReference type="SMR" id="P14365"/>
<dbReference type="GeneID" id="1486808"/>
<dbReference type="KEGG" id="vg:1486808"/>
<dbReference type="Proteomes" id="UP000008597">
    <property type="component" value="Segment"/>
</dbReference>
<dbReference type="InterPro" id="IPR018004">
    <property type="entry name" value="KilA/APSES_HTH"/>
</dbReference>
<dbReference type="InterPro" id="IPR017880">
    <property type="entry name" value="KilA_N"/>
</dbReference>
<dbReference type="Pfam" id="PF04383">
    <property type="entry name" value="KilA-N"/>
    <property type="match status" value="1"/>
</dbReference>
<dbReference type="PROSITE" id="PS51301">
    <property type="entry name" value="KILA_N"/>
    <property type="match status" value="1"/>
</dbReference>
<sequence>MKFKEVRNTIKKMNITDIKICGINEYFMSMKLLDVEVVIMRSNGFVNITRLCNLEGKDFNDWKQLESSRRLLNTLKDNNKLHDPIINIRHTRIKINGEYVSQLLLDYVIPWISPYVATRVSILMRYYRRCVALNIETEKDIDHSQELQNQISKIDEVYDRSIKDISNRFKEIETSYYSKLSTYLLTKAERVLEKDYSMEQDIDNNEDIRTDEMIAAIEAEIEENNRRYLSIISGIRKQHAEDRINISKIMLSGDSFNEIIVKIRDYIETTAKPAVANNYE</sequence>
<gene>
    <name type="ordered locus">FPV236</name>
</gene>
<feature type="chain" id="PRO_0000099732" description="Uncharacterized protein FPV236">
    <location>
        <begin position="1"/>
        <end position="280"/>
    </location>
</feature>
<feature type="domain" description="KilA-N" evidence="1">
    <location>
        <begin position="26"/>
        <end position="127"/>
    </location>
</feature>
<reference key="1">
    <citation type="journal article" date="1988" name="J. Gen. Virol.">
        <title>Sequence analysis of an 11.2 kilobase, near-terminal, BamHI fragment of fowlpox virus.</title>
        <authorList>
            <person name="Tomley F."/>
            <person name="Binns M."/>
            <person name="Campbell J."/>
            <person name="Boursnell M.E.G."/>
        </authorList>
    </citation>
    <scope>NUCLEOTIDE SEQUENCE [GENOMIC DNA]</scope>
    <source>
        <strain>FP-9 / Isolate HP-438</strain>
    </source>
</reference>
<reference key="2">
    <citation type="journal article" date="2000" name="J. Virol.">
        <title>The genome of fowlpox virus.</title>
        <authorList>
            <person name="Afonso C.L."/>
            <person name="Tulman E.R."/>
            <person name="Lu Z."/>
            <person name="Zsak L."/>
            <person name="Kutish G.F."/>
            <person name="Rock D.L."/>
        </authorList>
    </citation>
    <scope>NUCLEOTIDE SEQUENCE [LARGE SCALE GENOMIC DNA]</scope>
</reference>
<keyword id="KW-0244">Early protein</keyword>
<keyword id="KW-1185">Reference proteome</keyword>
<proteinExistence type="predicted"/>
<organism>
    <name type="scientific">Fowlpox virus (strain NVSL)</name>
    <name type="common">FPV</name>
    <dbReference type="NCBI Taxonomy" id="928301"/>
    <lineage>
        <taxon>Viruses</taxon>
        <taxon>Varidnaviria</taxon>
        <taxon>Bamfordvirae</taxon>
        <taxon>Nucleocytoviricota</taxon>
        <taxon>Pokkesviricetes</taxon>
        <taxon>Chitovirales</taxon>
        <taxon>Poxviridae</taxon>
        <taxon>Chordopoxvirinae</taxon>
        <taxon>Avipoxvirus</taxon>
        <taxon>Fowlpox virus</taxon>
    </lineage>
</organism>